<accession>A9KBT1</accession>
<protein>
    <recommendedName>
        <fullName evidence="1">Membrane protein insertase YidC</fullName>
    </recommendedName>
    <alternativeName>
        <fullName evidence="1">Foldase YidC</fullName>
    </alternativeName>
    <alternativeName>
        <fullName evidence="1">Membrane integrase YidC</fullName>
    </alternativeName>
    <alternativeName>
        <fullName evidence="1">Membrane protein YidC</fullName>
    </alternativeName>
</protein>
<organism>
    <name type="scientific">Coxiella burnetii (strain Dugway 5J108-111)</name>
    <dbReference type="NCBI Taxonomy" id="434922"/>
    <lineage>
        <taxon>Bacteria</taxon>
        <taxon>Pseudomonadati</taxon>
        <taxon>Pseudomonadota</taxon>
        <taxon>Gammaproteobacteria</taxon>
        <taxon>Legionellales</taxon>
        <taxon>Coxiellaceae</taxon>
        <taxon>Coxiella</taxon>
    </lineage>
</organism>
<sequence length="566" mass="64391">MDIKRIILYVIVALLAIALFNAWQRDYPPTPKPTPTVEQPTANGDHPTAYTPPAFTPGAAEKTKKAGTIALTSKVPEARLITVRTDVLDVEIDTQGGNIVSAKLPKYPVSLEEKQTPVQILSGEPNELYVAQSGLTNGNGQPTTVQFESAKKQYVLENGQNQLIVQLTGRAPDGLLVTKTYTFHRDDYAIHLAYQVKNNTSKPWQGSLYTQITRRQPPTEHHHFYVRSYNGASMGSPQTPYEKLSYESLDKQNIDRTSQSGWIAMQQHYFLSAWVPGNPELTYHYYSHVIPASGEPNVYVVGFVSPQMNVAAGSEAATHATLYVGPEIAKRLKGLAPGLERTIDYGWLWPISMLLFWILSSVHAVVKNWGWSIIITTILIKIVFYWFSAKSFRSMARMREMQPRIQALKERHGDDRQALSRATMELYRKEKINPLGGCLPMLIQVPVFIAFYYVIIESVQLRQAPFIFWIHDLSVKDPYYILPIIMGLSMLAQQWLSPTSPDPTQQKMMWILPVIFTVFFINFPAGLVLYWITNNVVQTLQQWYVNKTYESHKAKLKARRARKRKR</sequence>
<feature type="chain" id="PRO_1000088249" description="Membrane protein insertase YidC">
    <location>
        <begin position="1"/>
        <end position="566"/>
    </location>
</feature>
<feature type="transmembrane region" description="Helical" evidence="1">
    <location>
        <begin position="3"/>
        <end position="23"/>
    </location>
</feature>
<feature type="transmembrane region" description="Helical" evidence="1">
    <location>
        <begin position="346"/>
        <end position="366"/>
    </location>
</feature>
<feature type="transmembrane region" description="Helical" evidence="1">
    <location>
        <begin position="369"/>
        <end position="389"/>
    </location>
</feature>
<feature type="transmembrane region" description="Helical" evidence="1">
    <location>
        <begin position="436"/>
        <end position="456"/>
    </location>
</feature>
<feature type="transmembrane region" description="Helical" evidence="1">
    <location>
        <begin position="509"/>
        <end position="529"/>
    </location>
</feature>
<dbReference type="EMBL" id="CP000733">
    <property type="protein sequence ID" value="ABS77138.1"/>
    <property type="molecule type" value="Genomic_DNA"/>
</dbReference>
<dbReference type="RefSeq" id="WP_011996464.1">
    <property type="nucleotide sequence ID" value="NC_009727.1"/>
</dbReference>
<dbReference type="SMR" id="A9KBT1"/>
<dbReference type="KEGG" id="cbd:CBUD_0201"/>
<dbReference type="HOGENOM" id="CLU_016535_3_0_6"/>
<dbReference type="Proteomes" id="UP000008555">
    <property type="component" value="Chromosome"/>
</dbReference>
<dbReference type="GO" id="GO:0005886">
    <property type="term" value="C:plasma membrane"/>
    <property type="evidence" value="ECO:0007669"/>
    <property type="project" value="UniProtKB-SubCell"/>
</dbReference>
<dbReference type="GO" id="GO:0032977">
    <property type="term" value="F:membrane insertase activity"/>
    <property type="evidence" value="ECO:0007669"/>
    <property type="project" value="InterPro"/>
</dbReference>
<dbReference type="GO" id="GO:0051205">
    <property type="term" value="P:protein insertion into membrane"/>
    <property type="evidence" value="ECO:0007669"/>
    <property type="project" value="TreeGrafter"/>
</dbReference>
<dbReference type="GO" id="GO:0015031">
    <property type="term" value="P:protein transport"/>
    <property type="evidence" value="ECO:0007669"/>
    <property type="project" value="UniProtKB-KW"/>
</dbReference>
<dbReference type="CDD" id="cd20070">
    <property type="entry name" value="5TM_YidC_Alb3"/>
    <property type="match status" value="1"/>
</dbReference>
<dbReference type="CDD" id="cd19961">
    <property type="entry name" value="EcYidC-like_peri"/>
    <property type="match status" value="1"/>
</dbReference>
<dbReference type="Gene3D" id="2.70.98.90">
    <property type="match status" value="1"/>
</dbReference>
<dbReference type="HAMAP" id="MF_01810">
    <property type="entry name" value="YidC_type1"/>
    <property type="match status" value="1"/>
</dbReference>
<dbReference type="InterPro" id="IPR019998">
    <property type="entry name" value="Membr_insert_YidC"/>
</dbReference>
<dbReference type="InterPro" id="IPR028053">
    <property type="entry name" value="Membr_insert_YidC_N"/>
</dbReference>
<dbReference type="InterPro" id="IPR001708">
    <property type="entry name" value="YidC/ALB3/OXA1/COX18"/>
</dbReference>
<dbReference type="InterPro" id="IPR028055">
    <property type="entry name" value="YidC/Oxa/ALB_C"/>
</dbReference>
<dbReference type="InterPro" id="IPR047196">
    <property type="entry name" value="YidC_ALB_C"/>
</dbReference>
<dbReference type="InterPro" id="IPR038221">
    <property type="entry name" value="YidC_periplasmic_sf"/>
</dbReference>
<dbReference type="NCBIfam" id="NF002352">
    <property type="entry name" value="PRK01318.1-3"/>
    <property type="match status" value="1"/>
</dbReference>
<dbReference type="NCBIfam" id="TIGR03593">
    <property type="entry name" value="yidC_nterm"/>
    <property type="match status" value="1"/>
</dbReference>
<dbReference type="NCBIfam" id="TIGR03592">
    <property type="entry name" value="yidC_oxa1_cterm"/>
    <property type="match status" value="1"/>
</dbReference>
<dbReference type="PANTHER" id="PTHR12428:SF65">
    <property type="entry name" value="CYTOCHROME C OXIDASE ASSEMBLY PROTEIN COX18, MITOCHONDRIAL"/>
    <property type="match status" value="1"/>
</dbReference>
<dbReference type="PANTHER" id="PTHR12428">
    <property type="entry name" value="OXA1"/>
    <property type="match status" value="1"/>
</dbReference>
<dbReference type="Pfam" id="PF02096">
    <property type="entry name" value="60KD_IMP"/>
    <property type="match status" value="1"/>
</dbReference>
<dbReference type="Pfam" id="PF14849">
    <property type="entry name" value="YidC_periplas"/>
    <property type="match status" value="1"/>
</dbReference>
<dbReference type="PRINTS" id="PR00701">
    <property type="entry name" value="60KDINNERMP"/>
</dbReference>
<dbReference type="PRINTS" id="PR01900">
    <property type="entry name" value="YIDCPROTEIN"/>
</dbReference>
<evidence type="ECO:0000255" key="1">
    <source>
        <dbReference type="HAMAP-Rule" id="MF_01810"/>
    </source>
</evidence>
<gene>
    <name evidence="1" type="primary">yidC</name>
    <name type="ordered locus">CBUD_0201</name>
</gene>
<comment type="function">
    <text evidence="1">Required for the insertion and/or proper folding and/or complex formation of integral membrane proteins into the membrane. Involved in integration of membrane proteins that insert both dependently and independently of the Sec translocase complex, as well as at least some lipoproteins. Aids folding of multispanning membrane proteins.</text>
</comment>
<comment type="subunit">
    <text evidence="1">Interacts with the Sec translocase complex via SecD. Specifically interacts with transmembrane segments of nascent integral membrane proteins during membrane integration.</text>
</comment>
<comment type="subcellular location">
    <subcellularLocation>
        <location evidence="1">Cell inner membrane</location>
        <topology evidence="1">Multi-pass membrane protein</topology>
    </subcellularLocation>
</comment>
<comment type="similarity">
    <text evidence="1">Belongs to the OXA1/ALB3/YidC family. Type 1 subfamily.</text>
</comment>
<proteinExistence type="inferred from homology"/>
<name>YIDC_COXBN</name>
<reference key="1">
    <citation type="journal article" date="2009" name="Infect. Immun.">
        <title>Comparative genomics reveal extensive transposon-mediated genomic plasticity and diversity among potential effector proteins within the genus Coxiella.</title>
        <authorList>
            <person name="Beare P.A."/>
            <person name="Unsworth N."/>
            <person name="Andoh M."/>
            <person name="Voth D.E."/>
            <person name="Omsland A."/>
            <person name="Gilk S.D."/>
            <person name="Williams K.P."/>
            <person name="Sobral B.W."/>
            <person name="Kupko J.J. III"/>
            <person name="Porcella S.F."/>
            <person name="Samuel J.E."/>
            <person name="Heinzen R.A."/>
        </authorList>
    </citation>
    <scope>NUCLEOTIDE SEQUENCE [LARGE SCALE GENOMIC DNA]</scope>
    <source>
        <strain>Dugway 5J108-111</strain>
    </source>
</reference>
<keyword id="KW-0997">Cell inner membrane</keyword>
<keyword id="KW-1003">Cell membrane</keyword>
<keyword id="KW-0143">Chaperone</keyword>
<keyword id="KW-0472">Membrane</keyword>
<keyword id="KW-0653">Protein transport</keyword>
<keyword id="KW-0812">Transmembrane</keyword>
<keyword id="KW-1133">Transmembrane helix</keyword>
<keyword id="KW-0813">Transport</keyword>